<reference key="1">
    <citation type="journal article" date="2003" name="Plant Cell">
        <title>ACD6, a novel ankyrin protein, is a regulator and an effector of salicylic acid signaling in the Arabidopsis defense response.</title>
        <authorList>
            <person name="Lu H."/>
            <person name="Rate D.N."/>
            <person name="Song J.T."/>
            <person name="Greenberg J.T."/>
        </authorList>
    </citation>
    <scope>NUCLEOTIDE SEQUENCE [MRNA] (ISOFORM 1)</scope>
    <scope>FUNCTION</scope>
    <scope>DISRUPTION PHENOTYPE</scope>
    <scope>TISSUE SPECIFICITY</scope>
    <scope>INDUCTION BY VIRULENT PATHOGENS AND LIGHT</scope>
</reference>
<reference key="2">
    <citation type="journal article" date="1998" name="Nature">
        <title>Analysis of 1.9 Mb of contiguous sequence from chromosome 4 of Arabidopsis thaliana.</title>
        <authorList>
            <person name="Bevan M."/>
            <person name="Bancroft I."/>
            <person name="Bent E."/>
            <person name="Love K."/>
            <person name="Goodman H.M."/>
            <person name="Dean C."/>
            <person name="Bergkamp R."/>
            <person name="Dirkse W."/>
            <person name="van Staveren M."/>
            <person name="Stiekema W."/>
            <person name="Drost L."/>
            <person name="Ridley P."/>
            <person name="Hudson S.-A."/>
            <person name="Patel K."/>
            <person name="Murphy G."/>
            <person name="Piffanelli P."/>
            <person name="Wedler H."/>
            <person name="Wedler E."/>
            <person name="Wambutt R."/>
            <person name="Weitzenegger T."/>
            <person name="Pohl T."/>
            <person name="Terryn N."/>
            <person name="Gielen J."/>
            <person name="Villarroel R."/>
            <person name="De Clercq R."/>
            <person name="van Montagu M."/>
            <person name="Lecharny A."/>
            <person name="Aubourg S."/>
            <person name="Gy I."/>
            <person name="Kreis M."/>
            <person name="Lao N."/>
            <person name="Kavanagh T."/>
            <person name="Hempel S."/>
            <person name="Kotter P."/>
            <person name="Entian K.-D."/>
            <person name="Rieger M."/>
            <person name="Schaefer M."/>
            <person name="Funk B."/>
            <person name="Mueller-Auer S."/>
            <person name="Silvey M."/>
            <person name="James R."/>
            <person name="Monfort A."/>
            <person name="Pons A."/>
            <person name="Puigdomenech P."/>
            <person name="Douka A."/>
            <person name="Voukelatou E."/>
            <person name="Milioni D."/>
            <person name="Hatzopoulos P."/>
            <person name="Piravandi E."/>
            <person name="Obermaier B."/>
            <person name="Hilbert H."/>
            <person name="Duesterhoeft A."/>
            <person name="Moores T."/>
            <person name="Jones J.D.G."/>
            <person name="Eneva T."/>
            <person name="Palme K."/>
            <person name="Benes V."/>
            <person name="Rechmann S."/>
            <person name="Ansorge W."/>
            <person name="Cooke R."/>
            <person name="Berger C."/>
            <person name="Delseny M."/>
            <person name="Voet M."/>
            <person name="Volckaert G."/>
            <person name="Mewes H.-W."/>
            <person name="Klosterman S."/>
            <person name="Schueller C."/>
            <person name="Chalwatzis N."/>
        </authorList>
    </citation>
    <scope>NUCLEOTIDE SEQUENCE [LARGE SCALE GENOMIC DNA]</scope>
    <source>
        <strain>cv. Columbia</strain>
    </source>
</reference>
<reference key="3">
    <citation type="journal article" date="1999" name="Nature">
        <title>Sequence and analysis of chromosome 4 of the plant Arabidopsis thaliana.</title>
        <authorList>
            <person name="Mayer K.F.X."/>
            <person name="Schueller C."/>
            <person name="Wambutt R."/>
            <person name="Murphy G."/>
            <person name="Volckaert G."/>
            <person name="Pohl T."/>
            <person name="Duesterhoeft A."/>
            <person name="Stiekema W."/>
            <person name="Entian K.-D."/>
            <person name="Terryn N."/>
            <person name="Harris B."/>
            <person name="Ansorge W."/>
            <person name="Brandt P."/>
            <person name="Grivell L.A."/>
            <person name="Rieger M."/>
            <person name="Weichselgartner M."/>
            <person name="de Simone V."/>
            <person name="Obermaier B."/>
            <person name="Mache R."/>
            <person name="Mueller M."/>
            <person name="Kreis M."/>
            <person name="Delseny M."/>
            <person name="Puigdomenech P."/>
            <person name="Watson M."/>
            <person name="Schmidtheini T."/>
            <person name="Reichert B."/>
            <person name="Portetelle D."/>
            <person name="Perez-Alonso M."/>
            <person name="Boutry M."/>
            <person name="Bancroft I."/>
            <person name="Vos P."/>
            <person name="Hoheisel J."/>
            <person name="Zimmermann W."/>
            <person name="Wedler H."/>
            <person name="Ridley P."/>
            <person name="Langham S.-A."/>
            <person name="McCullagh B."/>
            <person name="Bilham L."/>
            <person name="Robben J."/>
            <person name="van der Schueren J."/>
            <person name="Grymonprez B."/>
            <person name="Chuang Y.-J."/>
            <person name="Vandenbussche F."/>
            <person name="Braeken M."/>
            <person name="Weltjens I."/>
            <person name="Voet M."/>
            <person name="Bastiaens I."/>
            <person name="Aert R."/>
            <person name="Defoor E."/>
            <person name="Weitzenegger T."/>
            <person name="Bothe G."/>
            <person name="Ramsperger U."/>
            <person name="Hilbert H."/>
            <person name="Braun M."/>
            <person name="Holzer E."/>
            <person name="Brandt A."/>
            <person name="Peters S."/>
            <person name="van Staveren M."/>
            <person name="Dirkse W."/>
            <person name="Mooijman P."/>
            <person name="Klein Lankhorst R."/>
            <person name="Rose M."/>
            <person name="Hauf J."/>
            <person name="Koetter P."/>
            <person name="Berneiser S."/>
            <person name="Hempel S."/>
            <person name="Feldpausch M."/>
            <person name="Lamberth S."/>
            <person name="Van den Daele H."/>
            <person name="De Keyser A."/>
            <person name="Buysshaert C."/>
            <person name="Gielen J."/>
            <person name="Villarroel R."/>
            <person name="De Clercq R."/>
            <person name="van Montagu M."/>
            <person name="Rogers J."/>
            <person name="Cronin A."/>
            <person name="Quail M.A."/>
            <person name="Bray-Allen S."/>
            <person name="Clark L."/>
            <person name="Doggett J."/>
            <person name="Hall S."/>
            <person name="Kay M."/>
            <person name="Lennard N."/>
            <person name="McLay K."/>
            <person name="Mayes R."/>
            <person name="Pettett A."/>
            <person name="Rajandream M.A."/>
            <person name="Lyne M."/>
            <person name="Benes V."/>
            <person name="Rechmann S."/>
            <person name="Borkova D."/>
            <person name="Bloecker H."/>
            <person name="Scharfe M."/>
            <person name="Grimm M."/>
            <person name="Loehnert T.-H."/>
            <person name="Dose S."/>
            <person name="de Haan M."/>
            <person name="Maarse A.C."/>
            <person name="Schaefer M."/>
            <person name="Mueller-Auer S."/>
            <person name="Gabel C."/>
            <person name="Fuchs M."/>
            <person name="Fartmann B."/>
            <person name="Granderath K."/>
            <person name="Dauner D."/>
            <person name="Herzl A."/>
            <person name="Neumann S."/>
            <person name="Argiriou A."/>
            <person name="Vitale D."/>
            <person name="Liguori R."/>
            <person name="Piravandi E."/>
            <person name="Massenet O."/>
            <person name="Quigley F."/>
            <person name="Clabauld G."/>
            <person name="Muendlein A."/>
            <person name="Felber R."/>
            <person name="Schnabl S."/>
            <person name="Hiller R."/>
            <person name="Schmidt W."/>
            <person name="Lecharny A."/>
            <person name="Aubourg S."/>
            <person name="Chefdor F."/>
            <person name="Cooke R."/>
            <person name="Berger C."/>
            <person name="Monfort A."/>
            <person name="Casacuberta E."/>
            <person name="Gibbons T."/>
            <person name="Weber N."/>
            <person name="Vandenbol M."/>
            <person name="Bargues M."/>
            <person name="Terol J."/>
            <person name="Torres A."/>
            <person name="Perez-Perez A."/>
            <person name="Purnelle B."/>
            <person name="Bent E."/>
            <person name="Johnson S."/>
            <person name="Tacon D."/>
            <person name="Jesse T."/>
            <person name="Heijnen L."/>
            <person name="Schwarz S."/>
            <person name="Scholler P."/>
            <person name="Heber S."/>
            <person name="Francs P."/>
            <person name="Bielke C."/>
            <person name="Frishman D."/>
            <person name="Haase D."/>
            <person name="Lemcke K."/>
            <person name="Mewes H.-W."/>
            <person name="Stocker S."/>
            <person name="Zaccaria P."/>
            <person name="Bevan M."/>
            <person name="Wilson R.K."/>
            <person name="de la Bastide M."/>
            <person name="Habermann K."/>
            <person name="Parnell L."/>
            <person name="Dedhia N."/>
            <person name="Gnoj L."/>
            <person name="Schutz K."/>
            <person name="Huang E."/>
            <person name="Spiegel L."/>
            <person name="Sekhon M."/>
            <person name="Murray J."/>
            <person name="Sheet P."/>
            <person name="Cordes M."/>
            <person name="Abu-Threideh J."/>
            <person name="Stoneking T."/>
            <person name="Kalicki J."/>
            <person name="Graves T."/>
            <person name="Harmon G."/>
            <person name="Edwards J."/>
            <person name="Latreille P."/>
            <person name="Courtney L."/>
            <person name="Cloud J."/>
            <person name="Abbott A."/>
            <person name="Scott K."/>
            <person name="Johnson D."/>
            <person name="Minx P."/>
            <person name="Bentley D."/>
            <person name="Fulton B."/>
            <person name="Miller N."/>
            <person name="Greco T."/>
            <person name="Kemp K."/>
            <person name="Kramer J."/>
            <person name="Fulton L."/>
            <person name="Mardis E."/>
            <person name="Dante M."/>
            <person name="Pepin K."/>
            <person name="Hillier L.W."/>
            <person name="Nelson J."/>
            <person name="Spieth J."/>
            <person name="Ryan E."/>
            <person name="Andrews S."/>
            <person name="Geisel C."/>
            <person name="Layman D."/>
            <person name="Du H."/>
            <person name="Ali J."/>
            <person name="Berghoff A."/>
            <person name="Jones K."/>
            <person name="Drone K."/>
            <person name="Cotton M."/>
            <person name="Joshu C."/>
            <person name="Antonoiu B."/>
            <person name="Zidanic M."/>
            <person name="Strong C."/>
            <person name="Sun H."/>
            <person name="Lamar B."/>
            <person name="Yordan C."/>
            <person name="Ma P."/>
            <person name="Zhong J."/>
            <person name="Preston R."/>
            <person name="Vil D."/>
            <person name="Shekher M."/>
            <person name="Matero A."/>
            <person name="Shah R."/>
            <person name="Swaby I.K."/>
            <person name="O'Shaughnessy A."/>
            <person name="Rodriguez M."/>
            <person name="Hoffman J."/>
            <person name="Till S."/>
            <person name="Granat S."/>
            <person name="Shohdy N."/>
            <person name="Hasegawa A."/>
            <person name="Hameed A."/>
            <person name="Lodhi M."/>
            <person name="Johnson A."/>
            <person name="Chen E."/>
            <person name="Marra M.A."/>
            <person name="Martienssen R."/>
            <person name="McCombie W.R."/>
        </authorList>
    </citation>
    <scope>NUCLEOTIDE SEQUENCE [LARGE SCALE GENOMIC DNA]</scope>
    <source>
        <strain>cv. Columbia</strain>
    </source>
</reference>
<reference key="4">
    <citation type="journal article" date="2017" name="Plant J.">
        <title>Araport11: a complete reannotation of the Arabidopsis thaliana reference genome.</title>
        <authorList>
            <person name="Cheng C.Y."/>
            <person name="Krishnakumar V."/>
            <person name="Chan A.P."/>
            <person name="Thibaud-Nissen F."/>
            <person name="Schobel S."/>
            <person name="Town C.D."/>
        </authorList>
    </citation>
    <scope>GENOME REANNOTATION</scope>
    <source>
        <strain>cv. Columbia</strain>
    </source>
</reference>
<reference key="5">
    <citation type="journal article" date="2002" name="Science">
        <title>Functional annotation of a full-length Arabidopsis cDNA collection.</title>
        <authorList>
            <person name="Seki M."/>
            <person name="Narusaka M."/>
            <person name="Kamiya A."/>
            <person name="Ishida J."/>
            <person name="Satou M."/>
            <person name="Sakurai T."/>
            <person name="Nakajima M."/>
            <person name="Enju A."/>
            <person name="Akiyama K."/>
            <person name="Oono Y."/>
            <person name="Muramatsu M."/>
            <person name="Hayashizaki Y."/>
            <person name="Kawai J."/>
            <person name="Carninci P."/>
            <person name="Itoh M."/>
            <person name="Ishii Y."/>
            <person name="Arakawa T."/>
            <person name="Shibata K."/>
            <person name="Shinagawa A."/>
            <person name="Shinozaki K."/>
        </authorList>
    </citation>
    <scope>NUCLEOTIDE SEQUENCE [LARGE SCALE MRNA] (ISOFORM 2)</scope>
    <source>
        <strain>cv. Columbia</strain>
    </source>
</reference>
<reference key="6">
    <citation type="journal article" date="2003" name="Science">
        <title>Empirical analysis of transcriptional activity in the Arabidopsis genome.</title>
        <authorList>
            <person name="Yamada K."/>
            <person name="Lim J."/>
            <person name="Dale J.M."/>
            <person name="Chen H."/>
            <person name="Shinn P."/>
            <person name="Palm C.J."/>
            <person name="Southwick A.M."/>
            <person name="Wu H.C."/>
            <person name="Kim C.J."/>
            <person name="Nguyen M."/>
            <person name="Pham P.K."/>
            <person name="Cheuk R.F."/>
            <person name="Karlin-Newmann G."/>
            <person name="Liu S.X."/>
            <person name="Lam B."/>
            <person name="Sakano H."/>
            <person name="Wu T."/>
            <person name="Yu G."/>
            <person name="Miranda M."/>
            <person name="Quach H.L."/>
            <person name="Tripp M."/>
            <person name="Chang C.H."/>
            <person name="Lee J.M."/>
            <person name="Toriumi M.J."/>
            <person name="Chan M.M."/>
            <person name="Tang C.C."/>
            <person name="Onodera C.S."/>
            <person name="Deng J.M."/>
            <person name="Akiyama K."/>
            <person name="Ansari Y."/>
            <person name="Arakawa T."/>
            <person name="Banh J."/>
            <person name="Banno F."/>
            <person name="Bowser L."/>
            <person name="Brooks S.Y."/>
            <person name="Carninci P."/>
            <person name="Chao Q."/>
            <person name="Choy N."/>
            <person name="Enju A."/>
            <person name="Goldsmith A.D."/>
            <person name="Gurjal M."/>
            <person name="Hansen N.F."/>
            <person name="Hayashizaki Y."/>
            <person name="Johnson-Hopson C."/>
            <person name="Hsuan V.W."/>
            <person name="Iida K."/>
            <person name="Karnes M."/>
            <person name="Khan S."/>
            <person name="Koesema E."/>
            <person name="Ishida J."/>
            <person name="Jiang P.X."/>
            <person name="Jones T."/>
            <person name="Kawai J."/>
            <person name="Kamiya A."/>
            <person name="Meyers C."/>
            <person name="Nakajima M."/>
            <person name="Narusaka M."/>
            <person name="Seki M."/>
            <person name="Sakurai T."/>
            <person name="Satou M."/>
            <person name="Tamse R."/>
            <person name="Vaysberg M."/>
            <person name="Wallender E.K."/>
            <person name="Wong C."/>
            <person name="Yamamura Y."/>
            <person name="Yuan S."/>
            <person name="Shinozaki K."/>
            <person name="Davis R.W."/>
            <person name="Theologis A."/>
            <person name="Ecker J.R."/>
        </authorList>
    </citation>
    <scope>NUCLEOTIDE SEQUENCE [LARGE SCALE MRNA]</scope>
    <source>
        <strain>cv. Columbia</strain>
    </source>
</reference>
<reference key="7">
    <citation type="journal article" date="2009" name="DNA Res.">
        <title>Analysis of multiple occurrences of alternative splicing events in Arabidopsis thaliana using novel sequenced full-length cDNAs.</title>
        <authorList>
            <person name="Iida K."/>
            <person name="Fukami-Kobayashi K."/>
            <person name="Toyoda A."/>
            <person name="Sakaki Y."/>
            <person name="Kobayashi M."/>
            <person name="Seki M."/>
            <person name="Shinozaki K."/>
        </authorList>
    </citation>
    <scope>NUCLEOTIDE SEQUENCE [LARGE SCALE MRNA] (ISOFORM 2)</scope>
    <source>
        <strain>cv. Columbia</strain>
    </source>
</reference>
<reference key="8">
    <citation type="submission" date="2004-09" db="EMBL/GenBank/DDBJ databases">
        <title>Large-scale analysis of RIKEN Arabidopsis full-length (RAFL) cDNAs.</title>
        <authorList>
            <person name="Totoki Y."/>
            <person name="Seki M."/>
            <person name="Ishida J."/>
            <person name="Nakajima M."/>
            <person name="Enju A."/>
            <person name="Kamiya A."/>
            <person name="Narusaka M."/>
            <person name="Shin-i T."/>
            <person name="Nakagawa M."/>
            <person name="Sakamoto N."/>
            <person name="Oishi K."/>
            <person name="Kohara Y."/>
            <person name="Kobayashi M."/>
            <person name="Toyoda A."/>
            <person name="Sakaki Y."/>
            <person name="Sakurai T."/>
            <person name="Iida K."/>
            <person name="Akiyama K."/>
            <person name="Satou M."/>
            <person name="Toyoda T."/>
            <person name="Konagaya A."/>
            <person name="Carninci P."/>
            <person name="Kawai J."/>
            <person name="Hayashizaki Y."/>
            <person name="Shinozaki K."/>
        </authorList>
    </citation>
    <scope>NUCLEOTIDE SEQUENCE [LARGE SCALE MRNA] (ISOFORM 1)</scope>
    <source>
        <strain>cv. Columbia</strain>
    </source>
</reference>
<reference key="9">
    <citation type="journal article" date="2010" name="Nature">
        <title>Natural allelic variation underlying a major fitness trade-off in Arabidopsis thaliana.</title>
        <authorList>
            <person name="Todesco M."/>
            <person name="Balasubramanian S."/>
            <person name="Hu T.T."/>
            <person name="Traw M.B."/>
            <person name="Horton M."/>
            <person name="Epple P."/>
            <person name="Kuhns C."/>
            <person name="Sureshkumar S."/>
            <person name="Schwartz C."/>
            <person name="Lanz C."/>
            <person name="Laitinen R.A.E."/>
            <person name="Huang Y."/>
            <person name="Chory J."/>
            <person name="Lipka V."/>
            <person name="Borevitz J.O."/>
            <person name="Dangl J.L."/>
            <person name="Bergelson J."/>
            <person name="Nordborg M."/>
            <person name="Weigel D."/>
        </authorList>
    </citation>
    <scope>NUCLEOTIDE SEQUENCE [GENOMIC DNA] OF 1-583</scope>
    <scope>DEVELOPMENTAL STAGE</scope>
    <source>
        <strain>cv. Columbia</strain>
        <strain>cv. Ei-2</strain>
    </source>
</reference>
<reference key="10">
    <citation type="journal article" date="1999" name="Plant Cell">
        <title>The gain-of-function Arabidopsis acd6 mutant reveals novel regulation and function of the salicylic acid signaling pathway in controlling cell death, defenses, and cell growth.</title>
        <authorList>
            <person name="Rate D.N."/>
            <person name="Cuenca J.V."/>
            <person name="Bowman G.R."/>
            <person name="Guttman D.S."/>
            <person name="Greenberg J.T."/>
        </authorList>
    </citation>
    <scope>FUNCTION</scope>
    <source>
        <strain>cv. Columbia</strain>
    </source>
</reference>
<reference key="11">
    <citation type="journal article" date="2001" name="Plant J.">
        <title>A role for salicylic acid and NPR1 in regulating cell growth in Arabidopsis.</title>
        <authorList>
            <person name="Vanacker H."/>
            <person name="Lu H."/>
            <person name="Rate D.N."/>
            <person name="Greenberg J.T."/>
        </authorList>
    </citation>
    <scope>FUNCTION</scope>
    <source>
        <strain>cv. Columbia</strain>
    </source>
</reference>
<reference key="12">
    <citation type="journal article" date="2005" name="Plant J.">
        <title>Structure-function analysis of the plasma membrane- localized Arabidopsis defense component ACD6.</title>
        <authorList>
            <person name="Lu H."/>
            <person name="Liu Y."/>
            <person name="Greenberg J.T."/>
        </authorList>
    </citation>
    <scope>FUNCTION</scope>
    <scope>MUTAGENESIS OF GLY-73; ALA-142; ALA-186; ALA-269; LEU-300; GLY-303; GLY-307; GLY-311; GLU-348; ALA-498; ALA-508; SER-550; LEU-557; LEU-591 AND SER-638</scope>
    <scope>SUBCELLULAR LOCATION</scope>
</reference>
<reference key="13">
    <citation type="journal article" date="2009" name="Plant J.">
        <title>Genetic analysis of acd6-1 reveals complex defense networks and leads to identification of novel defense genes in Arabidopsis.</title>
        <authorList>
            <person name="Lu H."/>
            <person name="Salimian S."/>
            <person name="Gamelin E."/>
            <person name="Wang G."/>
            <person name="Fedorowski J."/>
            <person name="LaCourse W."/>
            <person name="Greenberg J.T."/>
        </authorList>
    </citation>
    <scope>FUNCTION</scope>
</reference>
<reference key="14">
    <citation type="journal article" date="2010" name="J. Plant Physiol.">
        <title>SIZ1, a small ubiquitin-related modifier ligase, controls cold signaling through regulation of salicylic acid accumulation.</title>
        <authorList>
            <person name="Miura K."/>
            <person name="Ohta M."/>
        </authorList>
    </citation>
    <scope>FUNCTION</scope>
    <source>
        <strain>cv. Columbia</strain>
    </source>
</reference>
<reference key="15">
    <citation type="journal article" date="2014" name="Mol. Plant">
        <title>Salicylic acid signaling controls the maturation and localization of the arabidopsis defense protein ACCELERATED CELL DEATH6.</title>
        <authorList>
            <person name="Zhang Z."/>
            <person name="Shrestha J."/>
            <person name="Tateda C."/>
            <person name="Greenberg J.T."/>
        </authorList>
    </citation>
    <scope>MUTAGENESIS OF GLY-303; GLY-307; GLU-348 AND LEU-591</scope>
    <scope>SUBCELLULAR LOCATION</scope>
    <scope>SUBUNIT</scope>
    <scope>UBIQUITINATION</scope>
    <scope>DEGRADATION BY PROTEASOME</scope>
    <source>
        <strain>cv. Columbia</strain>
    </source>
</reference>
<evidence type="ECO:0000255" key="1"/>
<evidence type="ECO:0000256" key="2">
    <source>
        <dbReference type="SAM" id="MobiDB-lite"/>
    </source>
</evidence>
<evidence type="ECO:0000269" key="3">
    <source>
    </source>
</evidence>
<evidence type="ECO:0000269" key="4">
    <source>
    </source>
</evidence>
<evidence type="ECO:0000269" key="5">
    <source>
    </source>
</evidence>
<evidence type="ECO:0000269" key="6">
    <source>
    </source>
</evidence>
<evidence type="ECO:0000269" key="7">
    <source>
    </source>
</evidence>
<evidence type="ECO:0000269" key="8">
    <source>
    </source>
</evidence>
<evidence type="ECO:0000269" key="9">
    <source>
    </source>
</evidence>
<evidence type="ECO:0000269" key="10">
    <source>
    </source>
</evidence>
<evidence type="ECO:0000303" key="11">
    <source>
    </source>
</evidence>
<evidence type="ECO:0000305" key="12"/>
<evidence type="ECO:0000312" key="13">
    <source>
        <dbReference type="EMBL" id="AAM19791.1"/>
    </source>
</evidence>
<evidence type="ECO:0000312" key="14">
    <source>
        <dbReference type="EMBL" id="AEE83439.1"/>
    </source>
</evidence>
<evidence type="ECO:0000312" key="15">
    <source>
        <dbReference type="EMBL" id="CAB10219.1"/>
    </source>
</evidence>
<evidence type="ECO:0000312" key="16">
    <source>
        <dbReference type="EMBL" id="CAB78482.1"/>
    </source>
</evidence>
<gene>
    <name evidence="11" type="primary">ACD6</name>
    <name evidence="14" type="ordered locus">At4g14400</name>
    <name evidence="15" type="ORF">dl3240w</name>
    <name evidence="16" type="ORF">FCAALL.190</name>
</gene>
<feature type="chain" id="PRO_0000434534" description="Protein ACCELERATED CELL DEATH 6">
    <location>
        <begin position="1"/>
        <end position="670"/>
    </location>
</feature>
<feature type="topological domain" description="Cytoplasmic" evidence="12">
    <location>
        <begin position="1"/>
        <end position="456"/>
    </location>
</feature>
<feature type="transmembrane region" description="Helical" evidence="1">
    <location>
        <begin position="457"/>
        <end position="477"/>
    </location>
</feature>
<feature type="topological domain" description="Extracellular" evidence="12">
    <location>
        <begin position="478"/>
        <end position="492"/>
    </location>
</feature>
<feature type="transmembrane region" description="Helical" evidence="1">
    <location>
        <begin position="493"/>
        <end position="513"/>
    </location>
</feature>
<feature type="topological domain" description="Cytoplasmic" evidence="12">
    <location>
        <begin position="514"/>
        <end position="537"/>
    </location>
</feature>
<feature type="transmembrane region" description="Helical" evidence="1">
    <location>
        <begin position="538"/>
        <end position="558"/>
    </location>
</feature>
<feature type="topological domain" description="Extracellular" evidence="12">
    <location>
        <begin position="559"/>
        <end position="577"/>
    </location>
</feature>
<feature type="transmembrane region" description="Helical" evidence="1">
    <location>
        <begin position="578"/>
        <end position="598"/>
    </location>
</feature>
<feature type="topological domain" description="Cytoplasmic" evidence="12">
    <location>
        <begin position="599"/>
        <end position="602"/>
    </location>
</feature>
<feature type="transmembrane region" description="Helical" evidence="1">
    <location>
        <begin position="603"/>
        <end position="623"/>
    </location>
</feature>
<feature type="topological domain" description="Extracellular" evidence="12">
    <location>
        <begin position="624"/>
        <end position="638"/>
    </location>
</feature>
<feature type="transmembrane region" description="Helical" evidence="1">
    <location>
        <begin position="639"/>
        <end position="659"/>
    </location>
</feature>
<feature type="topological domain" description="Cytoplasmic" evidence="12">
    <location>
        <begin position="660"/>
        <end position="670"/>
    </location>
</feature>
<feature type="repeat" description="ANK 1" evidence="1">
    <location>
        <begin position="66"/>
        <end position="95"/>
    </location>
</feature>
<feature type="repeat" description="ANK 2" evidence="1">
    <location>
        <begin position="100"/>
        <end position="129"/>
    </location>
</feature>
<feature type="repeat" description="ANK 3" evidence="1">
    <location>
        <begin position="134"/>
        <end position="163"/>
    </location>
</feature>
<feature type="repeat" description="ANK 4" evidence="1">
    <location>
        <begin position="182"/>
        <end position="211"/>
    </location>
</feature>
<feature type="repeat" description="ANK 5" evidence="1">
    <location>
        <begin position="216"/>
        <end position="248"/>
    </location>
</feature>
<feature type="repeat" description="ANK 6" evidence="1">
    <location>
        <begin position="260"/>
        <end position="290"/>
    </location>
</feature>
<feature type="repeat" description="ANK 7" evidence="1">
    <location>
        <begin position="295"/>
        <end position="325"/>
    </location>
</feature>
<feature type="repeat" description="ANK 8" evidence="1">
    <location>
        <begin position="329"/>
        <end position="358"/>
    </location>
</feature>
<feature type="repeat" description="ANK 9" evidence="1">
    <location>
        <begin position="363"/>
        <end position="391"/>
    </location>
</feature>
<feature type="repeat" description="ANK 10" evidence="1">
    <location>
        <begin position="399"/>
        <end position="428"/>
    </location>
</feature>
<feature type="region of interest" description="Disordered" evidence="2">
    <location>
        <begin position="18"/>
        <end position="47"/>
    </location>
</feature>
<feature type="splice variant" id="VSP_057943" description="In isoform 2.">
    <location>
        <begin position="1"/>
        <end position="66"/>
    </location>
</feature>
<feature type="mutagenesis site" description="In E46; suppression of acd6-1-conferred phenotypes and increased P.syringae susceptibility." evidence="6">
    <original>G</original>
    <variation>D</variation>
    <location>
        <position position="73"/>
    </location>
</feature>
<feature type="mutagenesis site" description="In E11; suppression of acd6-1-conferred phenotypes and increased P.syringae susceptibility." evidence="6">
    <original>A</original>
    <variation>V</variation>
    <location>
        <position position="142"/>
    </location>
</feature>
<feature type="mutagenesis site" description="In E19; suppression of acd6-1-conferred phenotypes and increased P.syringae susceptibility." evidence="6">
    <original>A</original>
    <variation>V</variation>
    <location>
        <position position="186"/>
    </location>
</feature>
<feature type="mutagenesis site" description="In E38; suppression of acd6-1-conferred phenotypes and increased P.syringae susceptibility." evidence="6">
    <original>A</original>
    <variation>V</variation>
    <location>
        <position position="269"/>
    </location>
</feature>
<feature type="mutagenesis site" description="In E3; suppression of acd6-1-conferred phenotypes and increased P.syringae susceptibility." evidence="6">
    <original>L</original>
    <variation>F</variation>
    <location>
        <position position="300"/>
    </location>
</feature>
<feature type="mutagenesis site" description="In E4; suppression of acd6-1-conferred phenotypes and increased P.syringae susceptibility. Aberrant complex formation leading to reduced subcellular location at the plasma membrane." evidence="6 10">
    <original>G</original>
    <variation>E</variation>
    <location>
        <position position="303"/>
    </location>
</feature>
<feature type="mutagenesis site" description="In E1; suppression of acd6-1-conferred phenotypes and increased P.syringae susceptibility. Aberrant complex formation leading to reduced subcellular location at the plasma membrane." evidence="6 10">
    <original>G</original>
    <variation>E</variation>
    <location>
        <position position="307"/>
    </location>
</feature>
<feature type="mutagenesis site" description="In E7; suppression of acd6-1-conferred phenotypes and increased P.syringae susceptibility." evidence="6">
    <original>G</original>
    <variation>E</variation>
    <location>
        <position position="311"/>
    </location>
</feature>
<feature type="mutagenesis site" description="In E44; suppression of acd6-1-conferred phenotypes and increased P.syringae susceptibility. Aberrant complex formation leading to reduced subcellular location at the plasma membrane." evidence="6 10">
    <original>E</original>
    <variation>K</variation>
    <location>
        <position position="348"/>
    </location>
</feature>
<feature type="mutagenesis site" description="In E27; suppression of acd6-1-conferred phenotypes and increased P.syringae susceptibility." evidence="6">
    <original>A</original>
    <variation>T</variation>
    <location>
        <position position="498"/>
    </location>
</feature>
<feature type="mutagenesis site" description="In E35; suppression of acd6-1-conferred phenotypes and increased P.syringae susceptibility." evidence="6">
    <original>A</original>
    <variation>T</variation>
    <location>
        <position position="508"/>
    </location>
</feature>
<feature type="mutagenesis site" description="In E14; suppression of acd6-1-conferred phenotypes and increased P.syringae susceptibility." evidence="6">
    <original>S</original>
    <variation>F</variation>
    <location>
        <position position="550"/>
    </location>
</feature>
<feature type="mutagenesis site" description="In E40; suppression of acd6-1-conferred phenotypes and increased P.syringae susceptibility." evidence="6">
    <original>L</original>
    <variation>F</variation>
    <location>
        <position position="557"/>
    </location>
</feature>
<feature type="mutagenesis site" description="In acd6-1; gain-of-function leading to SA-dependent spontaneous cell death and increased disease resistance. Stronger accumulation at the plasma membrane." evidence="6 10">
    <original>L</original>
    <variation>F</variation>
    <location>
        <position position="591"/>
    </location>
</feature>
<feature type="mutagenesis site" description="In E25; suppression of acd6-1-conferred phenotypes and increased P.syringae susceptibility." evidence="6">
    <original>S</original>
    <variation>F</variation>
    <location>
        <position position="638"/>
    </location>
</feature>
<feature type="sequence conflict" description="In Ref. 8; BAD94307." evidence="12" ref="8">
    <original>K</original>
    <variation>E</variation>
    <location>
        <position position="347"/>
    </location>
</feature>
<feature type="sequence conflict" description="In Ref. 5; BAC43653." evidence="12" ref="5">
    <original>R</original>
    <variation>G</variation>
    <location>
        <position position="362"/>
    </location>
</feature>
<comment type="function">
    <text evidence="3 4 5 6 7 8 9 10">Dose-dependent activator of the defense response against virulent pathogens, including bacteria, fungi and oomycetes, that acts in a positive feedback loop with the defense signal salicylic acid (SA) (PubMed:10488236, PubMed:14507999, PubMed:16297071, PubMed:19144005, PubMed:20520716). Regulates the salicylic acid (SA) signaling pathway leading to cell death and modulating cell fate (e.g. cell enlargement and/or cell division) (PubMed:10488236, PubMed:11722764, PubMed:14507999). In response to SA signaling, triggers the accumulation of FLS2 at the plasma membrane, thus priming defenses (PubMed:24923602). Involved in SA-dependent freezing signaling and tolerance (PubMed:19959255).</text>
</comment>
<comment type="subunit">
    <text evidence="10">Component of large complexes containing, at least, FLS2, HSP70 and ACD6 in endoplasmic reticulum, plasma membrane and soluble fraction. Associated with HSP70 proteins during endoplasmic reticulum-associated degradation (ERAD). Reduced complex levels upon benzothiazole (BTH) treatment.</text>
</comment>
<comment type="subcellular location">
    <subcellularLocation>
        <location evidence="6 10">Cell membrane</location>
        <topology evidence="6 10">Multi-pass membrane protein</topology>
    </subcellularLocation>
    <subcellularLocation>
        <location evidence="10">Endoplasmic reticulum membrane</location>
        <topology evidence="10">Multi-pass membrane protein</topology>
    </subcellularLocation>
    <text evidence="10">Constitutively undergoes endoplasmic reticulum-associated degradation (ERAD), via ubiquitination and subsequent degradation by the proteasome. During salicylic acid (SA) signaling, the soluble pool decreases, whereas the plasma membrane pool increases.</text>
</comment>
<comment type="alternative products">
    <event type="alternative splicing"/>
    <isoform>
        <id>Q8LPS2-1</id>
        <name>1</name>
        <sequence type="displayed"/>
    </isoform>
    <isoform>
        <id>Q8LPS2-2</id>
        <name>2</name>
        <sequence type="described" ref="VSP_057943"/>
    </isoform>
</comment>
<comment type="tissue specificity">
    <text evidence="5">Basal expression requires light and salicylic acid (SA).</text>
</comment>
<comment type="developmental stage">
    <text evidence="9">Expression in leaves increases with age.</text>
</comment>
<comment type="induction">
    <text evidence="5 10">Accumulates in systemic uninfected tissues during Pseudomonas syringae infection or upon benzothiazole (BTH) treatment. Induced by light, but repressed by dark (PubMed:14507999). Accumulates upon MG132 treatment, a proteasome inhibitor. Target of endoplasmic reticulum-associated degradation (ERAD) when ubiquitinated (PubMed:24923602).</text>
</comment>
<comment type="PTM">
    <text evidence="10">Ubiquitinated.</text>
</comment>
<comment type="disruption phenotype">
    <text evidence="5 9">Reduced responsiveness to benzothiazole (BTH) and upon P.syringae infection with reduced salicylic acid (SA) levels and increased disease susceptibility and attenuated defenses (PubMed:14507999). Increased sensitivity to biotrophic fungi (e.g. Golovinomyces orontii T1 and G.cichoracearum UCSC1), biotrophic oomycetes (e.g. Hyaloperonospora arabidopsidis Noco2) and hemi-biotrophic bacteria (e.g. Pseudomonas syringae pv. tomato DC3000) (PubMed:20520716).</text>
</comment>
<comment type="miscellaneous">
    <text evidence="9">Sequence variations impacting defense responses are observed between cultivars. Enhanced resistance is correlated with a substantial reduction in vegetative biomass.</text>
</comment>
<comment type="miscellaneous">
    <text evidence="3 4 5 6 7 8 9">The dominant gain-of-function mutant acd6-1 and over-expressing plant ACD6-o is dwarf and shows spontaneous cell death and increased disease resistance, as well as increased defenses and better responsiveness to salicylic acid (SA). These symptoms are SA-dependent (PubMed:10488236, PubMed:14507999, PubMed:16297071, PubMed:19144005, PubMed:20520716). In acd6-1, constitutively high free and total SA levels leading to collapsed dead cells with adjacent enlarged cells in the palisade parenchyma cell layer. This phenotype is absent in NahG background, in which SA is degraded (PubMed:11722764). Strong accumulation of camalexin (an anti-fungal compound) and SA in acd6-1 (PubMed:19144005). The mutant acd6-1 exhibits freezing sensitivity, this sensitivity is suppressed in nahG background (PubMed:19959255).</text>
</comment>
<comment type="sequence caution" evidence="12">
    <conflict type="erroneous gene model prediction">
        <sequence resource="EMBL-CDS" id="CAB10219"/>
    </conflict>
</comment>
<comment type="sequence caution" evidence="12">
    <conflict type="erroneous gene model prediction">
        <sequence resource="EMBL-CDS" id="CAB78482"/>
    </conflict>
</comment>
<dbReference type="EMBL" id="AY344843">
    <property type="protein sequence ID" value="AAQ24110.1"/>
    <property type="molecule type" value="mRNA"/>
</dbReference>
<dbReference type="EMBL" id="Z97336">
    <property type="protein sequence ID" value="CAB10219.1"/>
    <property type="status" value="ALT_SEQ"/>
    <property type="molecule type" value="Genomic_DNA"/>
</dbReference>
<dbReference type="EMBL" id="AL161538">
    <property type="protein sequence ID" value="CAB78482.1"/>
    <property type="status" value="ALT_SEQ"/>
    <property type="molecule type" value="Genomic_DNA"/>
</dbReference>
<dbReference type="EMBL" id="CP002687">
    <property type="protein sequence ID" value="AEE83437.1"/>
    <property type="molecule type" value="Genomic_DNA"/>
</dbReference>
<dbReference type="EMBL" id="CP002687">
    <property type="protein sequence ID" value="AEE83438.1"/>
    <property type="molecule type" value="Genomic_DNA"/>
</dbReference>
<dbReference type="EMBL" id="CP002687">
    <property type="protein sequence ID" value="AEE83439.1"/>
    <property type="molecule type" value="Genomic_DNA"/>
</dbReference>
<dbReference type="EMBL" id="AK119077">
    <property type="protein sequence ID" value="BAC43653.1"/>
    <property type="molecule type" value="mRNA"/>
</dbReference>
<dbReference type="EMBL" id="AY094416">
    <property type="protein sequence ID" value="AAM19791.1"/>
    <property type="molecule type" value="mRNA"/>
</dbReference>
<dbReference type="EMBL" id="BT002281">
    <property type="protein sequence ID" value="AAN72292.1"/>
    <property type="molecule type" value="mRNA"/>
</dbReference>
<dbReference type="EMBL" id="AK316751">
    <property type="protein sequence ID" value="BAH19473.1"/>
    <property type="molecule type" value="mRNA"/>
</dbReference>
<dbReference type="EMBL" id="AK175409">
    <property type="protein sequence ID" value="BAD43172.1"/>
    <property type="molecule type" value="mRNA"/>
</dbReference>
<dbReference type="EMBL" id="AK176809">
    <property type="protein sequence ID" value="BAD44572.1"/>
    <property type="molecule type" value="mRNA"/>
</dbReference>
<dbReference type="EMBL" id="AK221386">
    <property type="protein sequence ID" value="BAD94307.1"/>
    <property type="molecule type" value="mRNA"/>
</dbReference>
<dbReference type="EMBL" id="HM214854">
    <property type="protein sequence ID" value="ADJ38625.1"/>
    <property type="molecule type" value="Genomic_DNA"/>
</dbReference>
<dbReference type="EMBL" id="HM214855">
    <property type="protein sequence ID" value="ADJ38626.1"/>
    <property type="molecule type" value="Genomic_DNA"/>
</dbReference>
<dbReference type="PIR" id="A71406">
    <property type="entry name" value="A71406"/>
</dbReference>
<dbReference type="RefSeq" id="NP_567430.1">
    <molecule id="Q8LPS2-1"/>
    <property type="nucleotide sequence ID" value="NM_117519.4"/>
</dbReference>
<dbReference type="RefSeq" id="NP_849381.1">
    <molecule id="Q8LPS2-2"/>
    <property type="nucleotide sequence ID" value="NM_179050.2"/>
</dbReference>
<dbReference type="RefSeq" id="NP_849382.1">
    <molecule id="Q8LPS2-2"/>
    <property type="nucleotide sequence ID" value="NM_179051.1"/>
</dbReference>
<dbReference type="SMR" id="Q8LPS2"/>
<dbReference type="FunCoup" id="Q8LPS2">
    <property type="interactions" value="14"/>
</dbReference>
<dbReference type="STRING" id="3702.Q8LPS2"/>
<dbReference type="TCDB" id="9.A.43.1.14">
    <property type="family name" value="the cadmium tolerance efflux pump (ctep) family"/>
</dbReference>
<dbReference type="iPTMnet" id="Q8LPS2"/>
<dbReference type="PaxDb" id="3702-AT4G14400.1"/>
<dbReference type="ProteomicsDB" id="244547">
    <molecule id="Q8LPS2-1"/>
</dbReference>
<dbReference type="DNASU" id="827085"/>
<dbReference type="EnsemblPlants" id="AT4G14400.1">
    <molecule id="Q8LPS2-1"/>
    <property type="protein sequence ID" value="AT4G14400.1"/>
    <property type="gene ID" value="AT4G14400"/>
</dbReference>
<dbReference type="EnsemblPlants" id="AT4G14400.2">
    <molecule id="Q8LPS2-2"/>
    <property type="protein sequence ID" value="AT4G14400.2"/>
    <property type="gene ID" value="AT4G14400"/>
</dbReference>
<dbReference type="EnsemblPlants" id="AT4G14400.3">
    <molecule id="Q8LPS2-2"/>
    <property type="protein sequence ID" value="AT4G14400.3"/>
    <property type="gene ID" value="AT4G14400"/>
</dbReference>
<dbReference type="GeneID" id="827085"/>
<dbReference type="Gramene" id="AT4G14400.1">
    <molecule id="Q8LPS2-1"/>
    <property type="protein sequence ID" value="AT4G14400.1"/>
    <property type="gene ID" value="AT4G14400"/>
</dbReference>
<dbReference type="Gramene" id="AT4G14400.2">
    <molecule id="Q8LPS2-2"/>
    <property type="protein sequence ID" value="AT4G14400.2"/>
    <property type="gene ID" value="AT4G14400"/>
</dbReference>
<dbReference type="Gramene" id="AT4G14400.3">
    <molecule id="Q8LPS2-2"/>
    <property type="protein sequence ID" value="AT4G14400.3"/>
    <property type="gene ID" value="AT4G14400"/>
</dbReference>
<dbReference type="KEGG" id="ath:AT4G14400"/>
<dbReference type="Araport" id="AT4G14400"/>
<dbReference type="TAIR" id="AT4G14400">
    <property type="gene designation" value="ACD6"/>
</dbReference>
<dbReference type="eggNOG" id="KOG0504">
    <property type="taxonomic scope" value="Eukaryota"/>
</dbReference>
<dbReference type="InParanoid" id="Q8LPS2"/>
<dbReference type="PhylomeDB" id="Q8LPS2"/>
<dbReference type="PRO" id="PR:Q8LPS2"/>
<dbReference type="Proteomes" id="UP000006548">
    <property type="component" value="Chromosome 4"/>
</dbReference>
<dbReference type="ExpressionAtlas" id="Q8LPS2">
    <property type="expression patterns" value="baseline and differential"/>
</dbReference>
<dbReference type="GO" id="GO:0005789">
    <property type="term" value="C:endoplasmic reticulum membrane"/>
    <property type="evidence" value="ECO:0000314"/>
    <property type="project" value="UniProtKB"/>
</dbReference>
<dbReference type="GO" id="GO:0016020">
    <property type="term" value="C:membrane"/>
    <property type="evidence" value="ECO:0000314"/>
    <property type="project" value="TAIR"/>
</dbReference>
<dbReference type="GO" id="GO:0005886">
    <property type="term" value="C:plasma membrane"/>
    <property type="evidence" value="ECO:0000314"/>
    <property type="project" value="UniProtKB"/>
</dbReference>
<dbReference type="GO" id="GO:0008219">
    <property type="term" value="P:cell death"/>
    <property type="evidence" value="ECO:0000315"/>
    <property type="project" value="TAIR"/>
</dbReference>
<dbReference type="GO" id="GO:0071446">
    <property type="term" value="P:cellular response to salicylic acid stimulus"/>
    <property type="evidence" value="ECO:0000314"/>
    <property type="project" value="UniProtKB"/>
</dbReference>
<dbReference type="GO" id="GO:0042742">
    <property type="term" value="P:defense response to bacterium"/>
    <property type="evidence" value="ECO:0000315"/>
    <property type="project" value="TAIR"/>
</dbReference>
<dbReference type="GO" id="GO:1900426">
    <property type="term" value="P:positive regulation of defense response to bacterium"/>
    <property type="evidence" value="ECO:0000315"/>
    <property type="project" value="UniProtKB"/>
</dbReference>
<dbReference type="GO" id="GO:1902290">
    <property type="term" value="P:positive regulation of defense response to oomycetes"/>
    <property type="evidence" value="ECO:0000315"/>
    <property type="project" value="UniProtKB"/>
</dbReference>
<dbReference type="GO" id="GO:0016567">
    <property type="term" value="P:protein ubiquitination"/>
    <property type="evidence" value="ECO:0000314"/>
    <property type="project" value="UniProtKB"/>
</dbReference>
<dbReference type="GO" id="GO:1900150">
    <property type="term" value="P:regulation of defense response to fungus"/>
    <property type="evidence" value="ECO:0000315"/>
    <property type="project" value="UniProtKB"/>
</dbReference>
<dbReference type="GO" id="GO:2000031">
    <property type="term" value="P:regulation of salicylic acid mediated signaling pathway"/>
    <property type="evidence" value="ECO:0000315"/>
    <property type="project" value="UniProtKB"/>
</dbReference>
<dbReference type="GO" id="GO:0009617">
    <property type="term" value="P:response to bacterium"/>
    <property type="evidence" value="ECO:0000270"/>
    <property type="project" value="UniProtKB"/>
</dbReference>
<dbReference type="GO" id="GO:0050826">
    <property type="term" value="P:response to freezing"/>
    <property type="evidence" value="ECO:0000315"/>
    <property type="project" value="UniProtKB"/>
</dbReference>
<dbReference type="GO" id="GO:0009416">
    <property type="term" value="P:response to light stimulus"/>
    <property type="evidence" value="ECO:0000270"/>
    <property type="project" value="UniProtKB"/>
</dbReference>
<dbReference type="GO" id="GO:0009751">
    <property type="term" value="P:response to salicylic acid"/>
    <property type="evidence" value="ECO:0000315"/>
    <property type="project" value="TAIR"/>
</dbReference>
<dbReference type="GO" id="GO:0009615">
    <property type="term" value="P:response to virus"/>
    <property type="evidence" value="ECO:0000270"/>
    <property type="project" value="TAIR"/>
</dbReference>
<dbReference type="FunFam" id="1.25.40.20:FF:000515">
    <property type="entry name" value="Ankyrin repeat family protein"/>
    <property type="match status" value="1"/>
</dbReference>
<dbReference type="Gene3D" id="1.25.40.20">
    <property type="entry name" value="Ankyrin repeat-containing domain"/>
    <property type="match status" value="2"/>
</dbReference>
<dbReference type="InterPro" id="IPR002110">
    <property type="entry name" value="Ankyrin_rpt"/>
</dbReference>
<dbReference type="InterPro" id="IPR036770">
    <property type="entry name" value="Ankyrin_rpt-contain_sf"/>
</dbReference>
<dbReference type="InterPro" id="IPR026961">
    <property type="entry name" value="PGG_dom"/>
</dbReference>
<dbReference type="PANTHER" id="PTHR24186:SF38">
    <property type="entry name" value="ANKYRIN REPEAT FAMILY PROTEIN"/>
    <property type="match status" value="1"/>
</dbReference>
<dbReference type="PANTHER" id="PTHR24186">
    <property type="entry name" value="PROTEIN PHOSPHATASE 1 REGULATORY SUBUNIT"/>
    <property type="match status" value="1"/>
</dbReference>
<dbReference type="Pfam" id="PF12796">
    <property type="entry name" value="Ank_2"/>
    <property type="match status" value="2"/>
</dbReference>
<dbReference type="Pfam" id="PF13962">
    <property type="entry name" value="PGG"/>
    <property type="match status" value="1"/>
</dbReference>
<dbReference type="SMART" id="SM00248">
    <property type="entry name" value="ANK"/>
    <property type="match status" value="9"/>
</dbReference>
<dbReference type="SUPFAM" id="SSF48403">
    <property type="entry name" value="Ankyrin repeat"/>
    <property type="match status" value="1"/>
</dbReference>
<dbReference type="PROSITE" id="PS50297">
    <property type="entry name" value="ANK_REP_REGION"/>
    <property type="match status" value="1"/>
</dbReference>
<dbReference type="PROSITE" id="PS50088">
    <property type="entry name" value="ANK_REPEAT"/>
    <property type="match status" value="1"/>
</dbReference>
<organism evidence="13">
    <name type="scientific">Arabidopsis thaliana</name>
    <name type="common">Mouse-ear cress</name>
    <dbReference type="NCBI Taxonomy" id="3702"/>
    <lineage>
        <taxon>Eukaryota</taxon>
        <taxon>Viridiplantae</taxon>
        <taxon>Streptophyta</taxon>
        <taxon>Embryophyta</taxon>
        <taxon>Tracheophyta</taxon>
        <taxon>Spermatophyta</taxon>
        <taxon>Magnoliopsida</taxon>
        <taxon>eudicotyledons</taxon>
        <taxon>Gunneridae</taxon>
        <taxon>Pentapetalae</taxon>
        <taxon>rosids</taxon>
        <taxon>malvids</taxon>
        <taxon>Brassicales</taxon>
        <taxon>Brassicaceae</taxon>
        <taxon>Camelineae</taxon>
        <taxon>Arabidopsis</taxon>
    </lineage>
</organism>
<protein>
    <recommendedName>
        <fullName evidence="11">Protein ACCELERATED CELL DEATH 6</fullName>
    </recommendedName>
</protein>
<accession>Q8LPS2</accession>
<accession>B9DFF6</accession>
<accession>D9IWZ2</accession>
<accession>O23296</accession>
<accession>Q56YD7</accession>
<accession>Q682F8</accession>
<accession>Q8GW50</accession>
<proteinExistence type="evidence at protein level"/>
<keyword id="KW-0025">Alternative splicing</keyword>
<keyword id="KW-0040">ANK repeat</keyword>
<keyword id="KW-1003">Cell membrane</keyword>
<keyword id="KW-0256">Endoplasmic reticulum</keyword>
<keyword id="KW-0472">Membrane</keyword>
<keyword id="KW-0611">Plant defense</keyword>
<keyword id="KW-1185">Reference proteome</keyword>
<keyword id="KW-0677">Repeat</keyword>
<keyword id="KW-0812">Transmembrane</keyword>
<keyword id="KW-1133">Transmembrane helix</keyword>
<keyword id="KW-0832">Ubl conjugation</keyword>
<name>ACD6_ARATH</name>
<sequence>MDSSGADLDRIEAQRSMLVSHDQRKDFSHSGGVGTTSPTGDTEPVPKFRTNLKLSDLFALPGEDVEMTPEIFGGMSNGEKECLEKLRSNGTPMERVKSNTGDSILHIAAKWGHLELVKEIIFECPCLLFEQNSSRQTPLHVATHGGHTKVVEALVASVTSALASLSTEESEGLNPHVLKDEDGNTALYYAIEGRYLEMATCLVNADKDAPFLGNNKGISSLYEAVDAGNKFEDLVKAILKTTDDNVDREVRKFNLDSKLQGNKHLAHVALKAKSIGVLDVILDEYPSLMDEQDEDGRTCLSYGASIGYYKGLCNILNRSTKGVYVCDQDGSFPIHSAAKNEHYEIIKEFIKRCPASKYLLNRLGQNILHVAAKNEASLTAYMLMHDKDTKHLGVGQDVDGNTPLHLAVMNWDFDSITCLASRNHEILKLRNKSGLRARDIAESEVKPNYIFHERWTLALLLYAIHSSGFESVKSLTIQSVPLDPKKNRHYVNALLVVAALVATVTFAAGFTIPGGYISDSKKPNLGRATLATNPTLFIFLLFDILAMQSSVATICTLIWAQLGDLALILKSLHVALPLLLFSLLCMPVAFLFGVITAIAHVKWLLVTISIISGGFFLFAIFILGPHVMLQRSHLPPSSGIFLKTFMLTIDISELFVILIKACFGCVACSE</sequence>